<feature type="chain" id="PRO_0000462035" description="Protein InSETG-4">
    <location>
        <begin position="1"/>
        <end position="151"/>
    </location>
</feature>
<dbReference type="EMBL" id="AL118508">
    <property type="status" value="NOT_ANNOTATED_CDS"/>
    <property type="molecule type" value="Genomic_DNA"/>
</dbReference>
<dbReference type="Proteomes" id="UP000005640">
    <property type="component" value="Unplaced"/>
</dbReference>
<proteinExistence type="evidence at protein level"/>
<name>INS4G_HUMAN</name>
<evidence type="ECO:0000269" key="1">
    <source>
    </source>
</evidence>
<evidence type="ECO:0000303" key="2">
    <source>
    </source>
</evidence>
<evidence type="ECO:0000305" key="3"/>
<organism>
    <name type="scientific">Homo sapiens</name>
    <name type="common">Human</name>
    <dbReference type="NCBI Taxonomy" id="9606"/>
    <lineage>
        <taxon>Eukaryota</taxon>
        <taxon>Metazoa</taxon>
        <taxon>Chordata</taxon>
        <taxon>Craniata</taxon>
        <taxon>Vertebrata</taxon>
        <taxon>Euteleostomi</taxon>
        <taxon>Mammalia</taxon>
        <taxon>Eutheria</taxon>
        <taxon>Euarchontoglires</taxon>
        <taxon>Primates</taxon>
        <taxon>Haplorrhini</taxon>
        <taxon>Catarrhini</taxon>
        <taxon>Hominidae</taxon>
        <taxon>Homo</taxon>
    </lineage>
</organism>
<comment type="subcellular location">
    <subcellularLocation>
        <location evidence="1">Cytoplasm</location>
        <location evidence="1">Cytosol</location>
    </subcellularLocation>
</comment>
<comment type="induction">
    <text evidence="1">Induced by DNA damage.</text>
</comment>
<accession>C0HMD7</accession>
<sequence>MVNRHLASQGLAVKTESSVWAHSMRDCWTSVFGAGKNGELLWISIPVACHCEQCPVLLLPAALADVLSTSSRKFSNASSALLSPRADMVSAVIPGAPLMMLKKKELKDETKNKTACKHLCSCCPQSPLPGYCQLPGPTFPKDQPGHSEGQR</sequence>
<protein>
    <recommendedName>
        <fullName evidence="2">Protein InSETG-4</fullName>
    </recommendedName>
</protein>
<reference evidence="3" key="1">
    <citation type="journal article" date="2001" name="Nature">
        <title>The DNA sequence and comparative analysis of human chromosome 20.</title>
        <authorList>
            <person name="Deloukas P."/>
            <person name="Matthews L.H."/>
            <person name="Ashurst J.L."/>
            <person name="Burton J."/>
            <person name="Gilbert J.G.R."/>
            <person name="Jones M."/>
            <person name="Stavrides G."/>
            <person name="Almeida J.P."/>
            <person name="Babbage A.K."/>
            <person name="Bagguley C.L."/>
            <person name="Bailey J."/>
            <person name="Barlow K.F."/>
            <person name="Bates K.N."/>
            <person name="Beard L.M."/>
            <person name="Beare D.M."/>
            <person name="Beasley O.P."/>
            <person name="Bird C.P."/>
            <person name="Blakey S.E."/>
            <person name="Bridgeman A.M."/>
            <person name="Brown A.J."/>
            <person name="Buck D."/>
            <person name="Burrill W.D."/>
            <person name="Butler A.P."/>
            <person name="Carder C."/>
            <person name="Carter N.P."/>
            <person name="Chapman J.C."/>
            <person name="Clamp M."/>
            <person name="Clark G."/>
            <person name="Clark L.N."/>
            <person name="Clark S.Y."/>
            <person name="Clee C.M."/>
            <person name="Clegg S."/>
            <person name="Cobley V.E."/>
            <person name="Collier R.E."/>
            <person name="Connor R.E."/>
            <person name="Corby N.R."/>
            <person name="Coulson A."/>
            <person name="Coville G.J."/>
            <person name="Deadman R."/>
            <person name="Dhami P.D."/>
            <person name="Dunn M."/>
            <person name="Ellington A.G."/>
            <person name="Frankland J.A."/>
            <person name="Fraser A."/>
            <person name="French L."/>
            <person name="Garner P."/>
            <person name="Grafham D.V."/>
            <person name="Griffiths C."/>
            <person name="Griffiths M.N.D."/>
            <person name="Gwilliam R."/>
            <person name="Hall R.E."/>
            <person name="Hammond S."/>
            <person name="Harley J.L."/>
            <person name="Heath P.D."/>
            <person name="Ho S."/>
            <person name="Holden J.L."/>
            <person name="Howden P.J."/>
            <person name="Huckle E."/>
            <person name="Hunt A.R."/>
            <person name="Hunt S.E."/>
            <person name="Jekosch K."/>
            <person name="Johnson C.M."/>
            <person name="Johnson D."/>
            <person name="Kay M.P."/>
            <person name="Kimberley A.M."/>
            <person name="King A."/>
            <person name="Knights A."/>
            <person name="Laird G.K."/>
            <person name="Lawlor S."/>
            <person name="Lehvaeslaiho M.H."/>
            <person name="Leversha M.A."/>
            <person name="Lloyd C."/>
            <person name="Lloyd D.M."/>
            <person name="Lovell J.D."/>
            <person name="Marsh V.L."/>
            <person name="Martin S.L."/>
            <person name="McConnachie L.J."/>
            <person name="McLay K."/>
            <person name="McMurray A.A."/>
            <person name="Milne S.A."/>
            <person name="Mistry D."/>
            <person name="Moore M.J.F."/>
            <person name="Mullikin J.C."/>
            <person name="Nickerson T."/>
            <person name="Oliver K."/>
            <person name="Parker A."/>
            <person name="Patel R."/>
            <person name="Pearce T.A.V."/>
            <person name="Peck A.I."/>
            <person name="Phillimore B.J.C.T."/>
            <person name="Prathalingam S.R."/>
            <person name="Plumb R.W."/>
            <person name="Ramsay H."/>
            <person name="Rice C.M."/>
            <person name="Ross M.T."/>
            <person name="Scott C.E."/>
            <person name="Sehra H.K."/>
            <person name="Shownkeen R."/>
            <person name="Sims S."/>
            <person name="Skuce C.D."/>
            <person name="Smith M.L."/>
            <person name="Soderlund C."/>
            <person name="Steward C.A."/>
            <person name="Sulston J.E."/>
            <person name="Swann R.M."/>
            <person name="Sycamore N."/>
            <person name="Taylor R."/>
            <person name="Tee L."/>
            <person name="Thomas D.W."/>
            <person name="Thorpe A."/>
            <person name="Tracey A."/>
            <person name="Tromans A.C."/>
            <person name="Vaudin M."/>
            <person name="Wall M."/>
            <person name="Wallis J.M."/>
            <person name="Whitehead S.L."/>
            <person name="Whittaker P."/>
            <person name="Willey D.L."/>
            <person name="Williams L."/>
            <person name="Williams S.A."/>
            <person name="Wilming L."/>
            <person name="Wray P.W."/>
            <person name="Hubbard T."/>
            <person name="Durbin R.M."/>
            <person name="Bentley D.R."/>
            <person name="Beck S."/>
            <person name="Rogers J."/>
        </authorList>
    </citation>
    <scope>NUCLEOTIDE SEQUENCE [LARGE SCALE GENOMIC DNA]</scope>
</reference>
<reference evidence="3" key="2">
    <citation type="journal article" date="2024" name="BMC Biol.">
        <title>A novel human protein-coding locus identified using a targeted RNA enrichment technique.</title>
        <authorList>
            <person name="Tang L."/>
            <person name="Xu D."/>
            <person name="Luo L."/>
            <person name="Ma W."/>
            <person name="He X."/>
            <person name="Diao Y."/>
            <person name="Ke R."/>
            <person name="Kapranov P."/>
        </authorList>
    </citation>
    <scope>IDENTIFICATION BY MASS SPECTROMETRY</scope>
    <scope>SUBCELLULAR LOCATION</scope>
    <scope>INDUCTION</scope>
</reference>
<keyword id="KW-0963">Cytoplasm</keyword>
<keyword id="KW-1185">Reference proteome</keyword>
<gene>
    <name type="primary">InSet4-G</name>
</gene>